<name>OBP_HHV7J</name>
<organism>
    <name type="scientific">Human herpesvirus 7 (strain JI)</name>
    <name type="common">HHV-7</name>
    <name type="synonym">Human T lymphotropic virus</name>
    <dbReference type="NCBI Taxonomy" id="57278"/>
    <lineage>
        <taxon>Viruses</taxon>
        <taxon>Duplodnaviria</taxon>
        <taxon>Heunggongvirae</taxon>
        <taxon>Peploviricota</taxon>
        <taxon>Herviviricetes</taxon>
        <taxon>Herpesvirales</taxon>
        <taxon>Orthoherpesviridae</taxon>
        <taxon>Betaherpesvirinae</taxon>
        <taxon>Roseolovirus</taxon>
        <taxon>Roseolovirus humanbeta7</taxon>
        <taxon>Human betaherpesvirus 7</taxon>
    </lineage>
</organism>
<gene>
    <name type="primary">U73</name>
</gene>
<accession>P52379</accession>
<proteinExistence type="inferred from homology"/>
<reference key="1">
    <citation type="journal article" date="1996" name="J. Virol.">
        <title>Determination and analysis of the complete nucleotide sequence of human herpesvirus.</title>
        <authorList>
            <person name="Nicholas J."/>
        </authorList>
    </citation>
    <scope>NUCLEOTIDE SEQUENCE [LARGE SCALE GENOMIC DNA]</scope>
</reference>
<dbReference type="EMBL" id="U43400">
    <property type="protein sequence ID" value="AAC54734.1"/>
    <property type="molecule type" value="Genomic_DNA"/>
</dbReference>
<dbReference type="PIR" id="T41974">
    <property type="entry name" value="T41974"/>
</dbReference>
<dbReference type="Proteomes" id="UP000009246">
    <property type="component" value="Segment"/>
</dbReference>
<dbReference type="GO" id="GO:0005524">
    <property type="term" value="F:ATP binding"/>
    <property type="evidence" value="ECO:0007669"/>
    <property type="project" value="UniProtKB-KW"/>
</dbReference>
<dbReference type="GO" id="GO:0003688">
    <property type="term" value="F:DNA replication origin binding"/>
    <property type="evidence" value="ECO:0007669"/>
    <property type="project" value="InterPro"/>
</dbReference>
<dbReference type="GO" id="GO:0006260">
    <property type="term" value="P:DNA replication"/>
    <property type="evidence" value="ECO:0007669"/>
    <property type="project" value="UniProtKB-KW"/>
</dbReference>
<dbReference type="Gene3D" id="3.40.50.300">
    <property type="entry name" value="P-loop containing nucleotide triphosphate hydrolases"/>
    <property type="match status" value="1"/>
</dbReference>
<dbReference type="InterPro" id="IPR014001">
    <property type="entry name" value="Helicase_ATP-bd"/>
</dbReference>
<dbReference type="InterPro" id="IPR027417">
    <property type="entry name" value="P-loop_NTPase"/>
</dbReference>
<dbReference type="InterPro" id="IPR003450">
    <property type="entry name" value="Replication_origin-bd"/>
</dbReference>
<dbReference type="Pfam" id="PF02399">
    <property type="entry name" value="Herpes_ori_bp"/>
    <property type="match status" value="1"/>
</dbReference>
<dbReference type="SMART" id="SM00487">
    <property type="entry name" value="DEXDc"/>
    <property type="match status" value="1"/>
</dbReference>
<dbReference type="SUPFAM" id="SSF52540">
    <property type="entry name" value="P-loop containing nucleoside triphosphate hydrolases"/>
    <property type="match status" value="1"/>
</dbReference>
<dbReference type="PROSITE" id="PS51192">
    <property type="entry name" value="HELICASE_ATP_BIND_1"/>
    <property type="match status" value="1"/>
</dbReference>
<protein>
    <recommendedName>
        <fullName>Replication origin-binding protein</fullName>
        <shortName>OBP</shortName>
    </recommendedName>
</protein>
<comment type="function">
    <text evidence="1">Probably involved in DNA replication. Binds the origin of replication (ori) (By similarity).</text>
</comment>
<comment type="similarity">
    <text evidence="3">Belongs to the herpesviridae OriBP family.</text>
</comment>
<feature type="chain" id="PRO_0000115872" description="Replication origin-binding protein">
    <location>
        <begin position="1"/>
        <end position="787"/>
    </location>
</feature>
<feature type="domain" description="Helicase ATP-binding" evidence="2">
    <location>
        <begin position="39"/>
        <end position="195"/>
    </location>
</feature>
<feature type="binding site" evidence="2">
    <location>
        <begin position="52"/>
        <end position="59"/>
    </location>
    <ligand>
        <name>ATP</name>
        <dbReference type="ChEBI" id="CHEBI:30616"/>
    </ligand>
</feature>
<organismHost>
    <name type="scientific">Homo sapiens</name>
    <name type="common">Human</name>
    <dbReference type="NCBI Taxonomy" id="9606"/>
</organismHost>
<evidence type="ECO:0000250" key="1"/>
<evidence type="ECO:0000255" key="2">
    <source>
        <dbReference type="PROSITE-ProRule" id="PRU00541"/>
    </source>
</evidence>
<evidence type="ECO:0000305" key="3"/>
<keyword id="KW-0067">ATP-binding</keyword>
<keyword id="KW-0235">DNA replication</keyword>
<keyword id="KW-0238">DNA-binding</keyword>
<keyword id="KW-0547">Nucleotide-binding</keyword>
<keyword id="KW-1185">Reference proteome</keyword>
<sequence>METQLQNDQLFLEWFGQNLLDCHFAQNVSVYLQDASMVHFKTFSEQIKIIRAPMGSGKTSALIEFLKTVSYIDSVLVISCRKTFAAELLNRFKKNDLNDFYLYSEIKERQINKNKLIIQVESLHRVTRNYHVLILDEIMSIIKQFYSKTMTKVKEVDAKLLTLIRNSTQIVAMDATVNRYVVDFFSLCMPHFKSALIINTFVSANFSNRSAYFCPTFIDGNLAFYGILKQKLGLGKNICLFCSTVTSADFMSELLKTDFPDKKILLLTSKQGKCHSVESWINYNIVIYTSIVTVGLSFDFLHFSAMFVYIHLVKGGPDMVSVFQSMGRVRKVTDNEIFIYLNPALIQVPLSVSPISIPQCYDWTLFEKSILQCSCMDFNKKCLSAQNYLSNSMIKQFFRIRHYIEKTTLLNLPDSLYLLCLLLDSNSIKVHIDGDVFPIAKEKFYAFTKMLVQGCHFFEKKKTDFVENTMTLKELFSNTNITVNGEFYELGNFQVHKDYIVNLNNFQNLFLKNDVDIFVIEEIMLTLKSEIRRFVFINALLQKYVATGIDVEKIKAFFKSRIKTFTLPENYICSKFYLLSDISGVHECGMLMDVAFLAESIRADLNLQSCTDTQTDISEDAILLCAARRSSEILRILQIVFTTHVQLFEKYNSYTLYLFNRLKGMQLNTWSLSIAKFSVSIIRMFFKCAFNMNLVKSKPRYIVGKPFRSLTKREIETLLDMWHVSRTNLKTYKELRKALTEASKKRQRKKIYKLLGHNISSYISETGCLFQHADAGMCLSSGCLLRS</sequence>